<dbReference type="GO" id="GO:0005576">
    <property type="term" value="C:extracellular region"/>
    <property type="evidence" value="ECO:0007669"/>
    <property type="project" value="UniProtKB-SubCell"/>
</dbReference>
<dbReference type="GO" id="GO:0050832">
    <property type="term" value="P:defense response to fungus"/>
    <property type="evidence" value="ECO:0007669"/>
    <property type="project" value="UniProtKB-KW"/>
</dbReference>
<dbReference type="GO" id="GO:0031640">
    <property type="term" value="P:killing of cells of another organism"/>
    <property type="evidence" value="ECO:0007669"/>
    <property type="project" value="UniProtKB-KW"/>
</dbReference>
<feature type="chain" id="PRO_0000096224" description="Thaumatin-like protein">
    <location>
        <begin position="1"/>
        <end position="15" status="greater than"/>
    </location>
</feature>
<feature type="non-terminal residue" evidence="3">
    <location>
        <position position="15"/>
    </location>
</feature>
<accession>P83957</accession>
<keyword id="KW-0929">Antimicrobial</keyword>
<keyword id="KW-0903">Direct protein sequencing</keyword>
<keyword id="KW-0295">Fungicide</keyword>
<keyword id="KW-0964">Secreted</keyword>
<comment type="function">
    <text evidence="2">Has antifungal activity against B.cinerea, F.oxysporum, M.arachidicola and P.piricola. Inhibits HIV-1 reverse transcriptase.</text>
</comment>
<comment type="subcellular location">
    <subcellularLocation>
        <location evidence="1">Secreted</location>
    </subcellularLocation>
</comment>
<comment type="similarity">
    <text evidence="4">Belongs to the thaumatin family.</text>
</comment>
<name>TLP_CASCH</name>
<organism>
    <name type="scientific">Castanopsis chinensis</name>
    <name type="common">Chinese evergreen chinquapin</name>
    <name type="synonym">Kweilin chestnut</name>
    <dbReference type="NCBI Taxonomy" id="279180"/>
    <lineage>
        <taxon>Eukaryota</taxon>
        <taxon>Viridiplantae</taxon>
        <taxon>Streptophyta</taxon>
        <taxon>Embryophyta</taxon>
        <taxon>Tracheophyta</taxon>
        <taxon>Spermatophyta</taxon>
        <taxon>Magnoliopsida</taxon>
        <taxon>eudicotyledons</taxon>
        <taxon>Gunneridae</taxon>
        <taxon>Pentapetalae</taxon>
        <taxon>rosids</taxon>
        <taxon>fabids</taxon>
        <taxon>Fagales</taxon>
        <taxon>Fagaceae</taxon>
        <taxon>Castanopsis</taxon>
    </lineage>
</organism>
<proteinExistence type="evidence at protein level"/>
<reference evidence="4" key="1">
    <citation type="journal article" date="2003" name="Biochem. Biophys. Res. Commun.">
        <title>Isolation of a large thaumatin-like antifungal protein from seeds of the Kweilin chestnut Castanopsis chinensis.</title>
        <authorList>
            <person name="Chu K.T."/>
            <person name="Ng T.B."/>
        </authorList>
    </citation>
    <scope>PROTEIN SEQUENCE</scope>
    <scope>FUNCTION</scope>
    <source>
        <tissue evidence="2">Seed</tissue>
    </source>
</reference>
<evidence type="ECO:0000250" key="1">
    <source>
        <dbReference type="UniProtKB" id="O80327"/>
    </source>
</evidence>
<evidence type="ECO:0000269" key="2">
    <source>
    </source>
</evidence>
<evidence type="ECO:0000303" key="3">
    <source>
    </source>
</evidence>
<evidence type="ECO:0000305" key="4"/>
<sequence>AKITFTNNHPRTIWP</sequence>
<protein>
    <recommendedName>
        <fullName>Thaumatin-like protein</fullName>
    </recommendedName>
</protein>